<feature type="chain" id="PRO_1000143118" description="Small ribosomal subunit protein uS15">
    <location>
        <begin position="1"/>
        <end position="89"/>
    </location>
</feature>
<sequence>MALTKERKNEIIEAYATKQGDTGSPEVQVAVLTEQITTLNDHLRTHKKDHHSRRGLLKMVGRRRNLLTYLRNKDVSRYRSLIERLGLRR</sequence>
<evidence type="ECO:0000255" key="1">
    <source>
        <dbReference type="HAMAP-Rule" id="MF_01343"/>
    </source>
</evidence>
<evidence type="ECO:0000305" key="2"/>
<reference key="1">
    <citation type="submission" date="2008-04" db="EMBL/GenBank/DDBJ databases">
        <title>Complete sequence of chromosome of Exiguobacterium sibiricum 255-15.</title>
        <authorList>
            <consortium name="US DOE Joint Genome Institute"/>
            <person name="Copeland A."/>
            <person name="Lucas S."/>
            <person name="Lapidus A."/>
            <person name="Glavina del Rio T."/>
            <person name="Dalin E."/>
            <person name="Tice H."/>
            <person name="Bruce D."/>
            <person name="Goodwin L."/>
            <person name="Pitluck S."/>
            <person name="Kiss H."/>
            <person name="Chertkov O."/>
            <person name="Monk C."/>
            <person name="Brettin T."/>
            <person name="Detter J.C."/>
            <person name="Han C."/>
            <person name="Kuske C.R."/>
            <person name="Schmutz J."/>
            <person name="Larimer F."/>
            <person name="Land M."/>
            <person name="Hauser L."/>
            <person name="Kyrpides N."/>
            <person name="Mikhailova N."/>
            <person name="Vishnivetskaya T."/>
            <person name="Rodrigues D.F."/>
            <person name="Gilichinsky D."/>
            <person name="Tiedje J."/>
            <person name="Richardson P."/>
        </authorList>
    </citation>
    <scope>NUCLEOTIDE SEQUENCE [LARGE SCALE GENOMIC DNA]</scope>
    <source>
        <strain>DSM 17290 / CCUG 55495 / CIP 109462 / JCM 13490 / 255-15</strain>
    </source>
</reference>
<name>RS15_EXIS2</name>
<proteinExistence type="inferred from homology"/>
<dbReference type="EMBL" id="CP001022">
    <property type="protein sequence ID" value="ACB61285.1"/>
    <property type="molecule type" value="Genomic_DNA"/>
</dbReference>
<dbReference type="RefSeq" id="WP_012370703.1">
    <property type="nucleotide sequence ID" value="NC_010556.1"/>
</dbReference>
<dbReference type="SMR" id="B1YI58"/>
<dbReference type="STRING" id="262543.Exig_1833"/>
<dbReference type="KEGG" id="esi:Exig_1833"/>
<dbReference type="eggNOG" id="COG0184">
    <property type="taxonomic scope" value="Bacteria"/>
</dbReference>
<dbReference type="HOGENOM" id="CLU_148518_0_0_9"/>
<dbReference type="OrthoDB" id="9799262at2"/>
<dbReference type="Proteomes" id="UP000001681">
    <property type="component" value="Chromosome"/>
</dbReference>
<dbReference type="GO" id="GO:0022627">
    <property type="term" value="C:cytosolic small ribosomal subunit"/>
    <property type="evidence" value="ECO:0007669"/>
    <property type="project" value="TreeGrafter"/>
</dbReference>
<dbReference type="GO" id="GO:0019843">
    <property type="term" value="F:rRNA binding"/>
    <property type="evidence" value="ECO:0007669"/>
    <property type="project" value="UniProtKB-UniRule"/>
</dbReference>
<dbReference type="GO" id="GO:0003735">
    <property type="term" value="F:structural constituent of ribosome"/>
    <property type="evidence" value="ECO:0007669"/>
    <property type="project" value="InterPro"/>
</dbReference>
<dbReference type="GO" id="GO:0006412">
    <property type="term" value="P:translation"/>
    <property type="evidence" value="ECO:0007669"/>
    <property type="project" value="UniProtKB-UniRule"/>
</dbReference>
<dbReference type="CDD" id="cd00353">
    <property type="entry name" value="Ribosomal_S15p_S13e"/>
    <property type="match status" value="1"/>
</dbReference>
<dbReference type="FunFam" id="1.10.287.10:FF:000002">
    <property type="entry name" value="30S ribosomal protein S15"/>
    <property type="match status" value="1"/>
</dbReference>
<dbReference type="Gene3D" id="6.10.250.3130">
    <property type="match status" value="1"/>
</dbReference>
<dbReference type="Gene3D" id="1.10.287.10">
    <property type="entry name" value="S15/NS1, RNA-binding"/>
    <property type="match status" value="1"/>
</dbReference>
<dbReference type="HAMAP" id="MF_01343_B">
    <property type="entry name" value="Ribosomal_uS15_B"/>
    <property type="match status" value="1"/>
</dbReference>
<dbReference type="InterPro" id="IPR000589">
    <property type="entry name" value="Ribosomal_uS15"/>
</dbReference>
<dbReference type="InterPro" id="IPR005290">
    <property type="entry name" value="Ribosomal_uS15_bac-type"/>
</dbReference>
<dbReference type="InterPro" id="IPR009068">
    <property type="entry name" value="uS15_NS1_RNA-bd_sf"/>
</dbReference>
<dbReference type="NCBIfam" id="TIGR00952">
    <property type="entry name" value="S15_bact"/>
    <property type="match status" value="1"/>
</dbReference>
<dbReference type="PANTHER" id="PTHR23321">
    <property type="entry name" value="RIBOSOMAL PROTEIN S15, BACTERIAL AND ORGANELLAR"/>
    <property type="match status" value="1"/>
</dbReference>
<dbReference type="PANTHER" id="PTHR23321:SF26">
    <property type="entry name" value="SMALL RIBOSOMAL SUBUNIT PROTEIN US15M"/>
    <property type="match status" value="1"/>
</dbReference>
<dbReference type="Pfam" id="PF00312">
    <property type="entry name" value="Ribosomal_S15"/>
    <property type="match status" value="1"/>
</dbReference>
<dbReference type="SMART" id="SM01387">
    <property type="entry name" value="Ribosomal_S15"/>
    <property type="match status" value="1"/>
</dbReference>
<dbReference type="SUPFAM" id="SSF47060">
    <property type="entry name" value="S15/NS1 RNA-binding domain"/>
    <property type="match status" value="1"/>
</dbReference>
<dbReference type="PROSITE" id="PS00362">
    <property type="entry name" value="RIBOSOMAL_S15"/>
    <property type="match status" value="1"/>
</dbReference>
<organism>
    <name type="scientific">Exiguobacterium sibiricum (strain DSM 17290 / CCUG 55495 / CIP 109462 / JCM 13490 / 255-15)</name>
    <dbReference type="NCBI Taxonomy" id="262543"/>
    <lineage>
        <taxon>Bacteria</taxon>
        <taxon>Bacillati</taxon>
        <taxon>Bacillota</taxon>
        <taxon>Bacilli</taxon>
        <taxon>Bacillales</taxon>
        <taxon>Bacillales Family XII. Incertae Sedis</taxon>
        <taxon>Exiguobacterium</taxon>
    </lineage>
</organism>
<comment type="function">
    <text evidence="1">One of the primary rRNA binding proteins, it binds directly to 16S rRNA where it helps nucleate assembly of the platform of the 30S subunit by binding and bridging several RNA helices of the 16S rRNA.</text>
</comment>
<comment type="function">
    <text evidence="1">Forms an intersubunit bridge (bridge B4) with the 23S rRNA of the 50S subunit in the ribosome.</text>
</comment>
<comment type="subunit">
    <text evidence="1">Part of the 30S ribosomal subunit. Forms a bridge to the 50S subunit in the 70S ribosome, contacting the 23S rRNA.</text>
</comment>
<comment type="similarity">
    <text evidence="1">Belongs to the universal ribosomal protein uS15 family.</text>
</comment>
<keyword id="KW-1185">Reference proteome</keyword>
<keyword id="KW-0687">Ribonucleoprotein</keyword>
<keyword id="KW-0689">Ribosomal protein</keyword>
<keyword id="KW-0694">RNA-binding</keyword>
<keyword id="KW-0699">rRNA-binding</keyword>
<protein>
    <recommendedName>
        <fullName evidence="1">Small ribosomal subunit protein uS15</fullName>
    </recommendedName>
    <alternativeName>
        <fullName evidence="2">30S ribosomal protein S15</fullName>
    </alternativeName>
</protein>
<gene>
    <name evidence="1" type="primary">rpsO</name>
    <name type="ordered locus">Exig_1833</name>
</gene>
<accession>B1YI58</accession>